<feature type="chain" id="PRO_0000178115" description="dITP/XTP pyrophosphatase">
    <location>
        <begin position="1"/>
        <end position="214"/>
    </location>
</feature>
<feature type="active site" description="Proton acceptor" evidence="1">
    <location>
        <position position="74"/>
    </location>
</feature>
<feature type="binding site" evidence="1">
    <location>
        <begin position="13"/>
        <end position="18"/>
    </location>
    <ligand>
        <name>substrate</name>
    </ligand>
</feature>
<feature type="binding site" evidence="1">
    <location>
        <position position="45"/>
    </location>
    <ligand>
        <name>Mg(2+)</name>
        <dbReference type="ChEBI" id="CHEBI:18420"/>
    </ligand>
</feature>
<feature type="binding site" evidence="1">
    <location>
        <position position="74"/>
    </location>
    <ligand>
        <name>Mg(2+)</name>
        <dbReference type="ChEBI" id="CHEBI:18420"/>
    </ligand>
</feature>
<feature type="binding site" evidence="1">
    <location>
        <position position="75"/>
    </location>
    <ligand>
        <name>substrate</name>
    </ligand>
</feature>
<feature type="binding site" evidence="1">
    <location>
        <begin position="163"/>
        <end position="166"/>
    </location>
    <ligand>
        <name>substrate</name>
    </ligand>
</feature>
<feature type="binding site" evidence="1">
    <location>
        <position position="186"/>
    </location>
    <ligand>
        <name>substrate</name>
    </ligand>
</feature>
<feature type="binding site" evidence="1">
    <location>
        <begin position="199"/>
        <end position="200"/>
    </location>
    <ligand>
        <name>substrate</name>
    </ligand>
</feature>
<comment type="function">
    <text evidence="1">Pyrophosphatase that catalyzes the hydrolysis of nucleoside triphosphates to their monophosphate derivatives, with a high preference for the non-canonical purine nucleotides XTP (xanthosine triphosphate), dITP (deoxyinosine triphosphate) and ITP. Seems to function as a house-cleaning enzyme that removes non-canonical purine nucleotides from the nucleotide pool, thus preventing their incorporation into DNA/RNA and avoiding chromosomal lesions.</text>
</comment>
<comment type="catalytic activity">
    <reaction evidence="1">
        <text>XTP + H2O = XMP + diphosphate + H(+)</text>
        <dbReference type="Rhea" id="RHEA:28610"/>
        <dbReference type="ChEBI" id="CHEBI:15377"/>
        <dbReference type="ChEBI" id="CHEBI:15378"/>
        <dbReference type="ChEBI" id="CHEBI:33019"/>
        <dbReference type="ChEBI" id="CHEBI:57464"/>
        <dbReference type="ChEBI" id="CHEBI:61314"/>
        <dbReference type="EC" id="3.6.1.66"/>
    </reaction>
</comment>
<comment type="catalytic activity">
    <reaction evidence="1">
        <text>dITP + H2O = dIMP + diphosphate + H(+)</text>
        <dbReference type="Rhea" id="RHEA:28342"/>
        <dbReference type="ChEBI" id="CHEBI:15377"/>
        <dbReference type="ChEBI" id="CHEBI:15378"/>
        <dbReference type="ChEBI" id="CHEBI:33019"/>
        <dbReference type="ChEBI" id="CHEBI:61194"/>
        <dbReference type="ChEBI" id="CHEBI:61382"/>
        <dbReference type="EC" id="3.6.1.66"/>
    </reaction>
</comment>
<comment type="catalytic activity">
    <reaction evidence="1">
        <text>ITP + H2O = IMP + diphosphate + H(+)</text>
        <dbReference type="Rhea" id="RHEA:29399"/>
        <dbReference type="ChEBI" id="CHEBI:15377"/>
        <dbReference type="ChEBI" id="CHEBI:15378"/>
        <dbReference type="ChEBI" id="CHEBI:33019"/>
        <dbReference type="ChEBI" id="CHEBI:58053"/>
        <dbReference type="ChEBI" id="CHEBI:61402"/>
        <dbReference type="EC" id="3.6.1.66"/>
    </reaction>
</comment>
<comment type="cofactor">
    <cofactor evidence="1">
        <name>Mg(2+)</name>
        <dbReference type="ChEBI" id="CHEBI:18420"/>
    </cofactor>
    <text evidence="1">Binds 1 Mg(2+) ion per subunit.</text>
</comment>
<comment type="subunit">
    <text evidence="1">Homodimer.</text>
</comment>
<comment type="similarity">
    <text evidence="1">Belongs to the HAM1 NTPase family.</text>
</comment>
<gene>
    <name type="ordered locus">Atu0326</name>
    <name type="ORF">AGR_C_570</name>
</gene>
<keyword id="KW-0378">Hydrolase</keyword>
<keyword id="KW-0460">Magnesium</keyword>
<keyword id="KW-0479">Metal-binding</keyword>
<keyword id="KW-0546">Nucleotide metabolism</keyword>
<keyword id="KW-0547">Nucleotide-binding</keyword>
<keyword id="KW-1185">Reference proteome</keyword>
<reference key="1">
    <citation type="journal article" date="2001" name="Science">
        <title>The genome of the natural genetic engineer Agrobacterium tumefaciens C58.</title>
        <authorList>
            <person name="Wood D.W."/>
            <person name="Setubal J.C."/>
            <person name="Kaul R."/>
            <person name="Monks D.E."/>
            <person name="Kitajima J.P."/>
            <person name="Okura V.K."/>
            <person name="Zhou Y."/>
            <person name="Chen L."/>
            <person name="Wood G.E."/>
            <person name="Almeida N.F. Jr."/>
            <person name="Woo L."/>
            <person name="Chen Y."/>
            <person name="Paulsen I.T."/>
            <person name="Eisen J.A."/>
            <person name="Karp P.D."/>
            <person name="Bovee D. Sr."/>
            <person name="Chapman P."/>
            <person name="Clendenning J."/>
            <person name="Deatherage G."/>
            <person name="Gillet W."/>
            <person name="Grant C."/>
            <person name="Kutyavin T."/>
            <person name="Levy R."/>
            <person name="Li M.-J."/>
            <person name="McClelland E."/>
            <person name="Palmieri A."/>
            <person name="Raymond C."/>
            <person name="Rouse G."/>
            <person name="Saenphimmachak C."/>
            <person name="Wu Z."/>
            <person name="Romero P."/>
            <person name="Gordon D."/>
            <person name="Zhang S."/>
            <person name="Yoo H."/>
            <person name="Tao Y."/>
            <person name="Biddle P."/>
            <person name="Jung M."/>
            <person name="Krespan W."/>
            <person name="Perry M."/>
            <person name="Gordon-Kamm B."/>
            <person name="Liao L."/>
            <person name="Kim S."/>
            <person name="Hendrick C."/>
            <person name="Zhao Z.-Y."/>
            <person name="Dolan M."/>
            <person name="Chumley F."/>
            <person name="Tingey S.V."/>
            <person name="Tomb J.-F."/>
            <person name="Gordon M.P."/>
            <person name="Olson M.V."/>
            <person name="Nester E.W."/>
        </authorList>
    </citation>
    <scope>NUCLEOTIDE SEQUENCE [LARGE SCALE GENOMIC DNA]</scope>
    <source>
        <strain>C58 / ATCC 33970</strain>
    </source>
</reference>
<reference key="2">
    <citation type="journal article" date="2001" name="Science">
        <title>Genome sequence of the plant pathogen and biotechnology agent Agrobacterium tumefaciens C58.</title>
        <authorList>
            <person name="Goodner B."/>
            <person name="Hinkle G."/>
            <person name="Gattung S."/>
            <person name="Miller N."/>
            <person name="Blanchard M."/>
            <person name="Qurollo B."/>
            <person name="Goldman B.S."/>
            <person name="Cao Y."/>
            <person name="Askenazi M."/>
            <person name="Halling C."/>
            <person name="Mullin L."/>
            <person name="Houmiel K."/>
            <person name="Gordon J."/>
            <person name="Vaudin M."/>
            <person name="Iartchouk O."/>
            <person name="Epp A."/>
            <person name="Liu F."/>
            <person name="Wollam C."/>
            <person name="Allinger M."/>
            <person name="Doughty D."/>
            <person name="Scott C."/>
            <person name="Lappas C."/>
            <person name="Markelz B."/>
            <person name="Flanagan C."/>
            <person name="Crowell C."/>
            <person name="Gurson J."/>
            <person name="Lomo C."/>
            <person name="Sear C."/>
            <person name="Strub G."/>
            <person name="Cielo C."/>
            <person name="Slater S."/>
        </authorList>
    </citation>
    <scope>NUCLEOTIDE SEQUENCE [LARGE SCALE GENOMIC DNA]</scope>
    <source>
        <strain>C58 / ATCC 33970</strain>
    </source>
</reference>
<organism>
    <name type="scientific">Agrobacterium fabrum (strain C58 / ATCC 33970)</name>
    <name type="common">Agrobacterium tumefaciens (strain C58)</name>
    <dbReference type="NCBI Taxonomy" id="176299"/>
    <lineage>
        <taxon>Bacteria</taxon>
        <taxon>Pseudomonadati</taxon>
        <taxon>Pseudomonadota</taxon>
        <taxon>Alphaproteobacteria</taxon>
        <taxon>Hyphomicrobiales</taxon>
        <taxon>Rhizobiaceae</taxon>
        <taxon>Rhizobium/Agrobacterium group</taxon>
        <taxon>Agrobacterium</taxon>
        <taxon>Agrobacterium tumefaciens complex</taxon>
    </lineage>
</organism>
<dbReference type="EC" id="3.6.1.66" evidence="1"/>
<dbReference type="EMBL" id="AE007869">
    <property type="protein sequence ID" value="AAK86143.2"/>
    <property type="molecule type" value="Genomic_DNA"/>
</dbReference>
<dbReference type="PIR" id="AF2616">
    <property type="entry name" value="AF2616"/>
</dbReference>
<dbReference type="PIR" id="F97398">
    <property type="entry name" value="F97398"/>
</dbReference>
<dbReference type="RefSeq" id="NP_353358.2">
    <property type="nucleotide sequence ID" value="NC_003062.2"/>
</dbReference>
<dbReference type="RefSeq" id="WP_010970821.1">
    <property type="nucleotide sequence ID" value="NC_003062.2"/>
</dbReference>
<dbReference type="SMR" id="Q8UIG9"/>
<dbReference type="STRING" id="176299.Atu0326"/>
<dbReference type="EnsemblBacteria" id="AAK86143">
    <property type="protein sequence ID" value="AAK86143"/>
    <property type="gene ID" value="Atu0326"/>
</dbReference>
<dbReference type="GeneID" id="1132364"/>
<dbReference type="KEGG" id="atu:Atu0326"/>
<dbReference type="PATRIC" id="fig|176299.10.peg.318"/>
<dbReference type="eggNOG" id="COG0127">
    <property type="taxonomic scope" value="Bacteria"/>
</dbReference>
<dbReference type="HOGENOM" id="CLU_082080_0_0_5"/>
<dbReference type="OrthoDB" id="9807456at2"/>
<dbReference type="PhylomeDB" id="Q8UIG9"/>
<dbReference type="BioCyc" id="AGRO:ATU0326-MONOMER"/>
<dbReference type="Proteomes" id="UP000000813">
    <property type="component" value="Chromosome circular"/>
</dbReference>
<dbReference type="GO" id="GO:0005829">
    <property type="term" value="C:cytosol"/>
    <property type="evidence" value="ECO:0007669"/>
    <property type="project" value="TreeGrafter"/>
</dbReference>
<dbReference type="GO" id="GO:0035870">
    <property type="term" value="F:dITP diphosphatase activity"/>
    <property type="evidence" value="ECO:0007669"/>
    <property type="project" value="RHEA"/>
</dbReference>
<dbReference type="GO" id="GO:0036220">
    <property type="term" value="F:ITP diphosphatase activity"/>
    <property type="evidence" value="ECO:0007669"/>
    <property type="project" value="UniProtKB-EC"/>
</dbReference>
<dbReference type="GO" id="GO:0046872">
    <property type="term" value="F:metal ion binding"/>
    <property type="evidence" value="ECO:0007669"/>
    <property type="project" value="UniProtKB-KW"/>
</dbReference>
<dbReference type="GO" id="GO:0000166">
    <property type="term" value="F:nucleotide binding"/>
    <property type="evidence" value="ECO:0007669"/>
    <property type="project" value="UniProtKB-KW"/>
</dbReference>
<dbReference type="GO" id="GO:0017111">
    <property type="term" value="F:ribonucleoside triphosphate phosphatase activity"/>
    <property type="evidence" value="ECO:0007669"/>
    <property type="project" value="InterPro"/>
</dbReference>
<dbReference type="GO" id="GO:0036222">
    <property type="term" value="F:XTP diphosphatase activity"/>
    <property type="evidence" value="ECO:0007669"/>
    <property type="project" value="RHEA"/>
</dbReference>
<dbReference type="GO" id="GO:0009117">
    <property type="term" value="P:nucleotide metabolic process"/>
    <property type="evidence" value="ECO:0007669"/>
    <property type="project" value="UniProtKB-KW"/>
</dbReference>
<dbReference type="GO" id="GO:0009146">
    <property type="term" value="P:purine nucleoside triphosphate catabolic process"/>
    <property type="evidence" value="ECO:0007669"/>
    <property type="project" value="UniProtKB-UniRule"/>
</dbReference>
<dbReference type="CDD" id="cd00515">
    <property type="entry name" value="HAM1"/>
    <property type="match status" value="1"/>
</dbReference>
<dbReference type="FunFam" id="3.90.950.10:FF:000001">
    <property type="entry name" value="dITP/XTP pyrophosphatase"/>
    <property type="match status" value="1"/>
</dbReference>
<dbReference type="Gene3D" id="3.90.950.10">
    <property type="match status" value="1"/>
</dbReference>
<dbReference type="HAMAP" id="MF_01405">
    <property type="entry name" value="Non_canon_purine_NTPase"/>
    <property type="match status" value="1"/>
</dbReference>
<dbReference type="InterPro" id="IPR020922">
    <property type="entry name" value="dITP/XTP_pyrophosphatase"/>
</dbReference>
<dbReference type="InterPro" id="IPR029001">
    <property type="entry name" value="ITPase-like_fam"/>
</dbReference>
<dbReference type="InterPro" id="IPR002637">
    <property type="entry name" value="RdgB/HAM1"/>
</dbReference>
<dbReference type="NCBIfam" id="TIGR00042">
    <property type="entry name" value="RdgB/HAM1 family non-canonical purine NTP pyrophosphatase"/>
    <property type="match status" value="1"/>
</dbReference>
<dbReference type="PANTHER" id="PTHR11067:SF9">
    <property type="entry name" value="INOSINE TRIPHOSPHATE PYROPHOSPHATASE"/>
    <property type="match status" value="1"/>
</dbReference>
<dbReference type="PANTHER" id="PTHR11067">
    <property type="entry name" value="INOSINE TRIPHOSPHATE PYROPHOSPHATASE/HAM1 PROTEIN"/>
    <property type="match status" value="1"/>
</dbReference>
<dbReference type="Pfam" id="PF01725">
    <property type="entry name" value="Ham1p_like"/>
    <property type="match status" value="1"/>
</dbReference>
<dbReference type="SUPFAM" id="SSF52972">
    <property type="entry name" value="ITPase-like"/>
    <property type="match status" value="1"/>
</dbReference>
<proteinExistence type="inferred from homology"/>
<protein>
    <recommendedName>
        <fullName evidence="1">dITP/XTP pyrophosphatase</fullName>
        <ecNumber evidence="1">3.6.1.66</ecNumber>
    </recommendedName>
    <alternativeName>
        <fullName evidence="1">Non-canonical purine NTP pyrophosphatase</fullName>
    </alternativeName>
    <alternativeName>
        <fullName evidence="1">Non-standard purine NTP pyrophosphatase</fullName>
    </alternativeName>
    <alternativeName>
        <fullName evidence="1">Nucleoside-triphosphate diphosphatase</fullName>
    </alternativeName>
    <alternativeName>
        <fullName evidence="1">Nucleoside-triphosphate pyrophosphatase</fullName>
        <shortName evidence="1">NTPase</shortName>
    </alternativeName>
</protein>
<accession>Q8UIG9</accession>
<sequence>MRKLDTRTIVVASHNKGKIAEIADLIGPFGFSAKSAAELNFSEPEETGTTFEENAAIKALASAKASGLPALSDDSGLVIDALDGAPGVYTANWAETADGTRDFAMAMQKVEDALAERGASKPEDRTARFVSVLCLAWPDGHVEYFRGEVEGTVVWPPRGTSGFGYDPIFKPDGYDTTFGEMSADEKHGWKHGDAFALSHRARAFKKFVETCLEA</sequence>
<name>IXTPA_AGRFC</name>
<evidence type="ECO:0000255" key="1">
    <source>
        <dbReference type="HAMAP-Rule" id="MF_01405"/>
    </source>
</evidence>